<evidence type="ECO:0000250" key="1">
    <source>
        <dbReference type="UniProtKB" id="Q02948"/>
    </source>
</evidence>
<evidence type="ECO:0000255" key="2"/>
<evidence type="ECO:0000256" key="3">
    <source>
        <dbReference type="SAM" id="MobiDB-lite"/>
    </source>
</evidence>
<evidence type="ECO:0000269" key="4">
    <source>
    </source>
</evidence>
<evidence type="ECO:0000303" key="5">
    <source>
    </source>
</evidence>
<evidence type="ECO:0000305" key="6"/>
<evidence type="ECO:0000312" key="7">
    <source>
        <dbReference type="EMBL" id="BAO40701.1"/>
    </source>
</evidence>
<feature type="chain" id="PRO_0000443879" description="Vacuolar protein sorting-associated protein 30">
    <location>
        <begin position="1"/>
        <end position="466"/>
    </location>
</feature>
<feature type="region of interest" description="Disordered" evidence="3">
    <location>
        <begin position="35"/>
        <end position="55"/>
    </location>
</feature>
<feature type="region of interest" description="BARA" evidence="1">
    <location>
        <begin position="279"/>
        <end position="463"/>
    </location>
</feature>
<feature type="region of interest" description="Required for membrane-association, autophagic function during starvation and normal autophagosome morphology" evidence="1">
    <location>
        <begin position="439"/>
        <end position="464"/>
    </location>
</feature>
<feature type="coiled-coil region" evidence="2">
    <location>
        <begin position="149"/>
        <end position="258"/>
    </location>
</feature>
<feature type="compositionally biased region" description="Basic and acidic residues" evidence="3">
    <location>
        <begin position="43"/>
        <end position="53"/>
    </location>
</feature>
<gene>
    <name evidence="1" type="primary">VPS30</name>
    <name evidence="5" type="synonym">ATG6</name>
    <name evidence="7" type="ORF">KLMA_50047</name>
</gene>
<protein>
    <recommendedName>
        <fullName evidence="1">Vacuolar protein sorting-associated protein 30</fullName>
    </recommendedName>
    <alternativeName>
        <fullName evidence="5">Autophagy-related protein 6</fullName>
    </alternativeName>
</protein>
<sequence length="466" mass="53321">MGDLTLRCMNCRSLLDIDSSLVDLSMAQRDLLLNSETNTDNSDNNKHNGENDRNIIPQEKLKIINQVKSPSQLRIGQAKNVTAESYVFLTDTEFSLTKFKNNGDEFVDDEDYDERNKTLSSRISALSNIFNILSCKSNIDYPVCQGCCDTLLEKLKEEYNQELKKRDTYHEFMKRIQEQNNSVEIYSDGNKGPKELKNLKREKEELLRQLQELEGENDLLQNDIQTLQSQLKEKQEQQLEQLREKNVQQMEHLSFIKDIQSLKNQRVVTLNHIDSLRKLNIYNETFRISHKGPFGTINELRLGSVPKIQVPWTEINAALGQVVLLLSLIVEKTSLPLPDYNLKPMGSTSVIEKRDLQTDQWFVLKAYGGSEFSLSSLFHKENPIDKALLAILEIIKKLSENVSSNTSEPASIELPYDISDDKINGLSILLKSSSPSLEWTTACKFLLTNIKWLLAFSTSRINKAKP</sequence>
<dbReference type="EMBL" id="AP012217">
    <property type="protein sequence ID" value="BAO40701.1"/>
    <property type="molecule type" value="Genomic_DNA"/>
</dbReference>
<dbReference type="RefSeq" id="XP_022676520.1">
    <property type="nucleotide sequence ID" value="XM_022820013.1"/>
</dbReference>
<dbReference type="SMR" id="W0TD11"/>
<dbReference type="GeneID" id="34716663"/>
<dbReference type="VEuPathDB" id="FungiDB:KLMA_50047"/>
<dbReference type="OrthoDB" id="20368at2759"/>
<dbReference type="Proteomes" id="UP000065495">
    <property type="component" value="Chromosome 5"/>
</dbReference>
<dbReference type="GO" id="GO:0010008">
    <property type="term" value="C:endosome membrane"/>
    <property type="evidence" value="ECO:0007669"/>
    <property type="project" value="UniProtKB-SubCell"/>
</dbReference>
<dbReference type="GO" id="GO:0034045">
    <property type="term" value="C:phagophore assembly site membrane"/>
    <property type="evidence" value="ECO:0007669"/>
    <property type="project" value="UniProtKB-SubCell"/>
</dbReference>
<dbReference type="GO" id="GO:0034271">
    <property type="term" value="C:phosphatidylinositol 3-kinase complex, class III, type I"/>
    <property type="evidence" value="ECO:0007669"/>
    <property type="project" value="TreeGrafter"/>
</dbReference>
<dbReference type="GO" id="GO:0034272">
    <property type="term" value="C:phosphatidylinositol 3-kinase complex, class III, type II"/>
    <property type="evidence" value="ECO:0007669"/>
    <property type="project" value="TreeGrafter"/>
</dbReference>
<dbReference type="GO" id="GO:0005774">
    <property type="term" value="C:vacuolar membrane"/>
    <property type="evidence" value="ECO:0007669"/>
    <property type="project" value="UniProtKB-SubCell"/>
</dbReference>
<dbReference type="GO" id="GO:0043548">
    <property type="term" value="F:phosphatidylinositol 3-kinase binding"/>
    <property type="evidence" value="ECO:0007669"/>
    <property type="project" value="TreeGrafter"/>
</dbReference>
<dbReference type="GO" id="GO:0030674">
    <property type="term" value="F:protein-macromolecule adaptor activity"/>
    <property type="evidence" value="ECO:0007669"/>
    <property type="project" value="TreeGrafter"/>
</dbReference>
<dbReference type="GO" id="GO:0000045">
    <property type="term" value="P:autophagosome assembly"/>
    <property type="evidence" value="ECO:0007669"/>
    <property type="project" value="TreeGrafter"/>
</dbReference>
<dbReference type="GO" id="GO:0006995">
    <property type="term" value="P:cellular response to nitrogen starvation"/>
    <property type="evidence" value="ECO:0007669"/>
    <property type="project" value="TreeGrafter"/>
</dbReference>
<dbReference type="GO" id="GO:0045324">
    <property type="term" value="P:late endosome to vacuole transport"/>
    <property type="evidence" value="ECO:0007669"/>
    <property type="project" value="TreeGrafter"/>
</dbReference>
<dbReference type="GO" id="GO:0000423">
    <property type="term" value="P:mitophagy"/>
    <property type="evidence" value="ECO:0007669"/>
    <property type="project" value="TreeGrafter"/>
</dbReference>
<dbReference type="GO" id="GO:0015031">
    <property type="term" value="P:protein transport"/>
    <property type="evidence" value="ECO:0007669"/>
    <property type="project" value="UniProtKB-KW"/>
</dbReference>
<dbReference type="Gene3D" id="6.10.250.3110">
    <property type="match status" value="1"/>
</dbReference>
<dbReference type="Gene3D" id="1.10.418.40">
    <property type="entry name" value="Autophagy protein 6/Beclin 1"/>
    <property type="match status" value="1"/>
</dbReference>
<dbReference type="InterPro" id="IPR007243">
    <property type="entry name" value="Atg6/Beclin"/>
</dbReference>
<dbReference type="InterPro" id="IPR038274">
    <property type="entry name" value="Atg6/Beclin_C_sf"/>
</dbReference>
<dbReference type="InterPro" id="IPR041691">
    <property type="entry name" value="Atg6/beclin_CC"/>
</dbReference>
<dbReference type="InterPro" id="IPR040455">
    <property type="entry name" value="Atg6_BARA"/>
</dbReference>
<dbReference type="PANTHER" id="PTHR12768">
    <property type="entry name" value="BECLIN 1"/>
    <property type="match status" value="1"/>
</dbReference>
<dbReference type="PANTHER" id="PTHR12768:SF4">
    <property type="entry name" value="BECLIN-1"/>
    <property type="match status" value="1"/>
</dbReference>
<dbReference type="Pfam" id="PF04111">
    <property type="entry name" value="APG6"/>
    <property type="match status" value="1"/>
</dbReference>
<dbReference type="Pfam" id="PF17675">
    <property type="entry name" value="APG6_N"/>
    <property type="match status" value="1"/>
</dbReference>
<name>BECN1_KLUMD</name>
<keyword id="KW-0072">Autophagy</keyword>
<keyword id="KW-0175">Coiled coil</keyword>
<keyword id="KW-0967">Endosome</keyword>
<keyword id="KW-0472">Membrane</keyword>
<keyword id="KW-0653">Protein transport</keyword>
<keyword id="KW-0813">Transport</keyword>
<keyword id="KW-0926">Vacuole</keyword>
<organism>
    <name type="scientific">Kluyveromyces marxianus (strain DMKU3-1042 / BCC 29191 / NBRC 104275)</name>
    <name type="common">Yeast</name>
    <name type="synonym">Candida kefyr</name>
    <dbReference type="NCBI Taxonomy" id="1003335"/>
    <lineage>
        <taxon>Eukaryota</taxon>
        <taxon>Fungi</taxon>
        <taxon>Dikarya</taxon>
        <taxon>Ascomycota</taxon>
        <taxon>Saccharomycotina</taxon>
        <taxon>Saccharomycetes</taxon>
        <taxon>Saccharomycetales</taxon>
        <taxon>Saccharomycetaceae</taxon>
        <taxon>Kluyveromyces</taxon>
    </lineage>
</organism>
<comment type="function">
    <text evidence="1">Required for cytoplasm to vacuole transport (Cvt), autophagy, nucleophagy, and mitophagy, as a part of the autophagy-specific VPS34 PI3-kinase complex I (By similarity). This complex is essential to recruit the ATG8-phosphatidylinositol conjugate and the ATG12-ATG5 conjugate to the pre-autophagosomal structure (By similarity). Also involved in endosome-to-Golgi retrograde transport as part of the VPS34 PI3-kinase complex II (By similarity).</text>
</comment>
<comment type="subunit">
    <text evidence="1">Component of the autophagy-specific VPS34 PI3-kinase complex I; and of the VPS34 PI3-kinase complex II (By similarity).</text>
</comment>
<comment type="subcellular location">
    <subcellularLocation>
        <location evidence="1">Endosome membrane</location>
        <topology evidence="1">Peripheral membrane protein</topology>
    </subcellularLocation>
    <subcellularLocation>
        <location evidence="1">Vacuole membrane</location>
        <topology evidence="1">Peripheral membrane protein</topology>
    </subcellularLocation>
    <subcellularLocation>
        <location evidence="1">Preautophagosomal structure membrane</location>
        <topology evidence="1">Peripheral membrane protein</topology>
    </subcellularLocation>
    <text evidence="1">With the VPS34 PI3-kinase complex I, localizes to the vacuole-isolation membrane contact site (VICS) during isolation membrane (IM) expansion (By similarity). The IM is a membrane sac generated from the pre-autophagosomal structure that ultimately expands to become a mature autophagosome (By similarity).</text>
</comment>
<comment type="domain">
    <text evidence="1">The C-terminal domain called the BARA domain is dispensable for the construction of both VPS34 PI3-kinase complexes, but is specifically required for autophagy through the targeting of complex I to the pre-autophagosomal structure (By similarity).</text>
</comment>
<comment type="disruption phenotype">
    <text evidence="4">Still forms preautophagosomal structures (PAS) in proximity to the vacuolar membrane (PubMed:26442587).</text>
</comment>
<comment type="similarity">
    <text evidence="6">Belongs to the beclin family.</text>
</comment>
<reference key="1">
    <citation type="journal article" date="2015" name="Biotechnol. Biofuels">
        <title>Genetic basis of the highly efficient yeast Kluyveromyces marxianus: complete genome sequence and transcriptome analyses.</title>
        <authorList>
            <person name="Lertwattanasakul N."/>
            <person name="Kosaka T."/>
            <person name="Hosoyama A."/>
            <person name="Suzuki Y."/>
            <person name="Rodrussamee N."/>
            <person name="Matsutani M."/>
            <person name="Murata M."/>
            <person name="Fujimoto N."/>
            <person name="Suprayogi X."/>
            <person name="Tsuchikane K."/>
            <person name="Limtong S."/>
            <person name="Fujita N."/>
            <person name="Yamada M."/>
        </authorList>
    </citation>
    <scope>NUCLEOTIDE SEQUENCE [LARGE SCALE GENOMIC DNA]</scope>
    <source>
        <strain>DMKU3-1042 / BCC 29191 / NBRC 104275</strain>
    </source>
</reference>
<reference key="2">
    <citation type="journal article" date="2015" name="J. Biol. Chem.">
        <title>The thermotolerant yeast Kluyveromyces marxianus is a useful organism for structural and biochemical studies of autophagy.</title>
        <authorList>
            <person name="Yamamoto H."/>
            <person name="Shima T."/>
            <person name="Yamaguchi M."/>
            <person name="Mochizuki Y."/>
            <person name="Hoshida H."/>
            <person name="Kakuta S."/>
            <person name="Kondo-Kakuta C."/>
            <person name="Noda N.N."/>
            <person name="Inagaki F."/>
            <person name="Itoh T."/>
            <person name="Akada R."/>
            <person name="Ohsumi Y."/>
        </authorList>
    </citation>
    <scope>IDENTIFICATION</scope>
    <scope>DISRUPTION PHENOTYPE</scope>
</reference>
<accession>W0TD11</accession>
<proteinExistence type="inferred from homology"/>